<comment type="function">
    <text evidence="1">May play a role in DNA repair. It seems to be involved in an RecBC-independent recombinational process of DNA repair. It may act with RecF and RecO.</text>
</comment>
<comment type="similarity">
    <text evidence="1">Belongs to the RecR family.</text>
</comment>
<sequence length="197" mass="22047">MTPDPLNRLVAQLAKLPGIGEKTAQRLAFHILRAPGEYAAELSQAIREVKEKVHLCVRCFSLTDAETCNFCRDARRDERVLCVVETFADLMALERTREFKGRYHVLHGVLSPLEGVGPDQLRIRELLERLNDSRVEELILATNPDVEGEATALYLTRLLKPMGLRVTRIAQGLPMGGDLEFADQATLAKALSARRDL</sequence>
<name>RECR_MYXXD</name>
<accession>Q1DAZ9</accession>
<feature type="chain" id="PRO_0000322919" description="Recombination protein RecR">
    <location>
        <begin position="1"/>
        <end position="197"/>
    </location>
</feature>
<feature type="domain" description="Toprim" evidence="1">
    <location>
        <begin position="79"/>
        <end position="174"/>
    </location>
</feature>
<feature type="zinc finger region" description="C4-type" evidence="1">
    <location>
        <begin position="56"/>
        <end position="71"/>
    </location>
</feature>
<organism>
    <name type="scientific">Myxococcus xanthus (strain DK1622)</name>
    <dbReference type="NCBI Taxonomy" id="246197"/>
    <lineage>
        <taxon>Bacteria</taxon>
        <taxon>Pseudomonadati</taxon>
        <taxon>Myxococcota</taxon>
        <taxon>Myxococcia</taxon>
        <taxon>Myxococcales</taxon>
        <taxon>Cystobacterineae</taxon>
        <taxon>Myxococcaceae</taxon>
        <taxon>Myxococcus</taxon>
    </lineage>
</organism>
<protein>
    <recommendedName>
        <fullName evidence="1">Recombination protein RecR</fullName>
    </recommendedName>
</protein>
<evidence type="ECO:0000255" key="1">
    <source>
        <dbReference type="HAMAP-Rule" id="MF_00017"/>
    </source>
</evidence>
<proteinExistence type="inferred from homology"/>
<dbReference type="EMBL" id="CP000113">
    <property type="protein sequence ID" value="ABF87659.1"/>
    <property type="molecule type" value="Genomic_DNA"/>
</dbReference>
<dbReference type="RefSeq" id="WP_011552029.1">
    <property type="nucleotide sequence ID" value="NC_008095.1"/>
</dbReference>
<dbReference type="SMR" id="Q1DAZ9"/>
<dbReference type="STRING" id="246197.MXAN_1930"/>
<dbReference type="EnsemblBacteria" id="ABF87659">
    <property type="protein sequence ID" value="ABF87659"/>
    <property type="gene ID" value="MXAN_1930"/>
</dbReference>
<dbReference type="GeneID" id="41359344"/>
<dbReference type="KEGG" id="mxa:MXAN_1930"/>
<dbReference type="eggNOG" id="COG0353">
    <property type="taxonomic scope" value="Bacteria"/>
</dbReference>
<dbReference type="HOGENOM" id="CLU_060739_1_0_7"/>
<dbReference type="OrthoDB" id="9802672at2"/>
<dbReference type="Proteomes" id="UP000002402">
    <property type="component" value="Chromosome"/>
</dbReference>
<dbReference type="GO" id="GO:0003677">
    <property type="term" value="F:DNA binding"/>
    <property type="evidence" value="ECO:0007669"/>
    <property type="project" value="UniProtKB-UniRule"/>
</dbReference>
<dbReference type="GO" id="GO:0008270">
    <property type="term" value="F:zinc ion binding"/>
    <property type="evidence" value="ECO:0007669"/>
    <property type="project" value="UniProtKB-KW"/>
</dbReference>
<dbReference type="GO" id="GO:0006310">
    <property type="term" value="P:DNA recombination"/>
    <property type="evidence" value="ECO:0007669"/>
    <property type="project" value="UniProtKB-UniRule"/>
</dbReference>
<dbReference type="GO" id="GO:0006281">
    <property type="term" value="P:DNA repair"/>
    <property type="evidence" value="ECO:0007669"/>
    <property type="project" value="UniProtKB-UniRule"/>
</dbReference>
<dbReference type="CDD" id="cd01025">
    <property type="entry name" value="TOPRIM_recR"/>
    <property type="match status" value="1"/>
</dbReference>
<dbReference type="Gene3D" id="3.40.1360.10">
    <property type="match status" value="1"/>
</dbReference>
<dbReference type="Gene3D" id="6.10.250.240">
    <property type="match status" value="1"/>
</dbReference>
<dbReference type="Gene3D" id="1.10.8.420">
    <property type="entry name" value="RecR Domain 1"/>
    <property type="match status" value="1"/>
</dbReference>
<dbReference type="HAMAP" id="MF_00017">
    <property type="entry name" value="RecR"/>
    <property type="match status" value="1"/>
</dbReference>
<dbReference type="InterPro" id="IPR000093">
    <property type="entry name" value="DNA_Rcmb_RecR"/>
</dbReference>
<dbReference type="InterPro" id="IPR003583">
    <property type="entry name" value="Hlx-hairpin-Hlx_DNA-bd_motif"/>
</dbReference>
<dbReference type="InterPro" id="IPR023627">
    <property type="entry name" value="Rcmb_RecR"/>
</dbReference>
<dbReference type="InterPro" id="IPR015967">
    <property type="entry name" value="Rcmb_RecR_Znf"/>
</dbReference>
<dbReference type="InterPro" id="IPR006171">
    <property type="entry name" value="TOPRIM_dom"/>
</dbReference>
<dbReference type="InterPro" id="IPR034137">
    <property type="entry name" value="TOPRIM_RecR"/>
</dbReference>
<dbReference type="NCBIfam" id="TIGR00615">
    <property type="entry name" value="recR"/>
    <property type="match status" value="1"/>
</dbReference>
<dbReference type="PANTHER" id="PTHR30446">
    <property type="entry name" value="RECOMBINATION PROTEIN RECR"/>
    <property type="match status" value="1"/>
</dbReference>
<dbReference type="PANTHER" id="PTHR30446:SF0">
    <property type="entry name" value="RECOMBINATION PROTEIN RECR"/>
    <property type="match status" value="1"/>
</dbReference>
<dbReference type="Pfam" id="PF21175">
    <property type="entry name" value="RecR_C"/>
    <property type="match status" value="1"/>
</dbReference>
<dbReference type="Pfam" id="PF21176">
    <property type="entry name" value="RecR_HhH"/>
    <property type="match status" value="1"/>
</dbReference>
<dbReference type="Pfam" id="PF02132">
    <property type="entry name" value="RecR_ZnF"/>
    <property type="match status" value="1"/>
</dbReference>
<dbReference type="Pfam" id="PF13662">
    <property type="entry name" value="Toprim_4"/>
    <property type="match status" value="1"/>
</dbReference>
<dbReference type="SMART" id="SM00278">
    <property type="entry name" value="HhH1"/>
    <property type="match status" value="1"/>
</dbReference>
<dbReference type="SMART" id="SM00493">
    <property type="entry name" value="TOPRIM"/>
    <property type="match status" value="1"/>
</dbReference>
<dbReference type="SUPFAM" id="SSF111304">
    <property type="entry name" value="Recombination protein RecR"/>
    <property type="match status" value="1"/>
</dbReference>
<dbReference type="PROSITE" id="PS01300">
    <property type="entry name" value="RECR"/>
    <property type="match status" value="1"/>
</dbReference>
<dbReference type="PROSITE" id="PS50880">
    <property type="entry name" value="TOPRIM"/>
    <property type="match status" value="1"/>
</dbReference>
<keyword id="KW-0227">DNA damage</keyword>
<keyword id="KW-0233">DNA recombination</keyword>
<keyword id="KW-0234">DNA repair</keyword>
<keyword id="KW-0479">Metal-binding</keyword>
<keyword id="KW-1185">Reference proteome</keyword>
<keyword id="KW-0862">Zinc</keyword>
<keyword id="KW-0863">Zinc-finger</keyword>
<gene>
    <name evidence="1" type="primary">recR</name>
    <name type="ordered locus">MXAN_1930</name>
</gene>
<reference key="1">
    <citation type="journal article" date="2006" name="Proc. Natl. Acad. Sci. U.S.A.">
        <title>Evolution of sensory complexity recorded in a myxobacterial genome.</title>
        <authorList>
            <person name="Goldman B.S."/>
            <person name="Nierman W.C."/>
            <person name="Kaiser D."/>
            <person name="Slater S.C."/>
            <person name="Durkin A.S."/>
            <person name="Eisen J.A."/>
            <person name="Ronning C.M."/>
            <person name="Barbazuk W.B."/>
            <person name="Blanchard M."/>
            <person name="Field C."/>
            <person name="Halling C."/>
            <person name="Hinkle G."/>
            <person name="Iartchuk O."/>
            <person name="Kim H.S."/>
            <person name="Mackenzie C."/>
            <person name="Madupu R."/>
            <person name="Miller N."/>
            <person name="Shvartsbeyn A."/>
            <person name="Sullivan S.A."/>
            <person name="Vaudin M."/>
            <person name="Wiegand R."/>
            <person name="Kaplan H.B."/>
        </authorList>
    </citation>
    <scope>NUCLEOTIDE SEQUENCE [LARGE SCALE GENOMIC DNA]</scope>
    <source>
        <strain>DK1622</strain>
    </source>
</reference>